<keyword id="KW-0066">ATP synthesis</keyword>
<keyword id="KW-0138">CF(0)</keyword>
<keyword id="KW-0375">Hydrogen ion transport</keyword>
<keyword id="KW-0406">Ion transport</keyword>
<keyword id="KW-0472">Membrane</keyword>
<keyword id="KW-0496">Mitochondrion</keyword>
<keyword id="KW-0999">Mitochondrion inner membrane</keyword>
<keyword id="KW-1185">Reference proteome</keyword>
<keyword id="KW-0812">Transmembrane</keyword>
<keyword id="KW-1133">Transmembrane helix</keyword>
<keyword id="KW-0813">Transport</keyword>
<evidence type="ECO:0000250" key="1">
    <source>
        <dbReference type="UniProtKB" id="P81450"/>
    </source>
</evidence>
<evidence type="ECO:0000255" key="2"/>
<evidence type="ECO:0000269" key="3">
    <source>
    </source>
</evidence>
<evidence type="ECO:0000269" key="4">
    <source>
    </source>
</evidence>
<evidence type="ECO:0000303" key="5">
    <source>
    </source>
</evidence>
<evidence type="ECO:0000305" key="6"/>
<evidence type="ECO:0000305" key="7">
    <source>
    </source>
</evidence>
<evidence type="ECO:0000312" key="8">
    <source>
        <dbReference type="EMBL" id="CAG81134.2"/>
    </source>
</evidence>
<evidence type="ECO:0000312" key="9">
    <source>
        <dbReference type="Proteomes" id="UP000001300"/>
    </source>
</evidence>
<proteinExistence type="evidence at protein level"/>
<comment type="function">
    <text evidence="3 4">Mitochondrial membrane ATP synthase (F(1)F(0) ATP synthase or Complex V) produces ATP from ADP in the presence of a proton gradient across the membrane which is generated by electron transport complexes of the respiratory chain (PubMed:25759169). F-type ATP synthases consist of two structural domains, F(1) - containing the extramembraneous catalytic core, and F(0) - containing the membrane proton channel, linked together by a central stalk and a peripheral stalk (PubMed:27373333). During catalysis, ATP synthesis in the catalytic domain of F(1) is coupled via a rotary mechanism of the central stalk subunits to proton translocation (PubMed:27373333). Part of the complex F(0) domain (PubMed:27373333). Minor subunit located with subunit a/ATP6 in the membrane (PubMed:27373333).</text>
</comment>
<comment type="subunit">
    <text evidence="3 4">F-type ATP synthases have 2 components, the catalytic core F(1) and the membrane-embedded component F(0), linked together by a central stalk and a peripheral stalk (PubMed:27373333). The central stalk, also called rotor shaft, is often seen as part of F(1) (PubMed:27373333). The peripheral stalk is seen as part of F(0) (PubMed:27373333). F(0) contains the membrane channel next to the rotor (PubMed:27373333). F-type ATP synthases form dimers but each monomer functions independently in ATP generation (PubMed:27373333). The dimer consists of 17 different polypeptides: ATP1 (subunit alpha, 3 molecules per monomer, part of F(1)), ATP2 (subunit beta, 3 copies per monomer, part of F(1)), ATP3 (subunit gamma, part of the central stalk), ATP4 (subunit b, part of the peripheral stalk), ATP5/OSCP (subunit 5/OSCP, part of the peripheral stalk), ATP6 (subunit a, part of the peripheral stalk), ATP7 (subunit d, part of the peripheral stalk), ATP8 (subunit 8, part of the peripheral stalk), OLI1 (subunit c, part of the rotor, 10 molecules per monomer), ATP14 (subunit h, part of the peripheral stalk), ATP15 (subunit epsilon, part of the central stalk), ATP16 (subunit delta, part of the central stalk), ATP17 (subunit f, part of the peripheral stalk), ATP18 (subunit i/j, part of the peripheral stalk), ATP19 (subunit k, dimer-specific, at interface between monomers), ATP20 (subunit g, at interface between monomers), TIM11 (subunit e, at interface between monomers) (PubMed:25759169, PubMed:27373333).</text>
</comment>
<comment type="subcellular location">
    <subcellularLocation>
        <location evidence="7">Mitochondrion inner membrane</location>
        <topology evidence="2">Single-pass membrane protein</topology>
    </subcellularLocation>
    <text evidence="7">The F-type ATP synthase complex is anchored in the mitochondrial inner membrane via the F(0) domain with the F(1) domain and the peripheral stalk extending into the mitochondrial matrix.</text>
</comment>
<comment type="mass spectrometry" mass="6810.1" method="MALDI" evidence="3"/>
<comment type="similarity">
    <text evidence="6">Belongs to the ATPase j subunit family.</text>
</comment>
<dbReference type="EMBL" id="CR382130">
    <property type="protein sequence ID" value="CAG81134.2"/>
    <property type="molecule type" value="Genomic_DNA"/>
</dbReference>
<dbReference type="RefSeq" id="XP_502942.2">
    <property type="nucleotide sequence ID" value="XM_502942.2"/>
</dbReference>
<dbReference type="SMR" id="Q6C8S0"/>
<dbReference type="FunCoup" id="Q6C8S0">
    <property type="interactions" value="85"/>
</dbReference>
<dbReference type="STRING" id="284591.Q6C8S0"/>
<dbReference type="EnsemblFungi" id="CAG81134">
    <property type="protein sequence ID" value="CAG81134"/>
    <property type="gene ID" value="YALI0_D17490g"/>
</dbReference>
<dbReference type="KEGG" id="yli:2911301"/>
<dbReference type="VEuPathDB" id="FungiDB:YALI0_D17490g"/>
<dbReference type="HOGENOM" id="CLU_174950_0_0_1"/>
<dbReference type="InParanoid" id="Q6C8S0"/>
<dbReference type="OMA" id="KPMWPFY"/>
<dbReference type="OrthoDB" id="20818at4891"/>
<dbReference type="Proteomes" id="UP000001300">
    <property type="component" value="Chromosome D"/>
</dbReference>
<dbReference type="GO" id="GO:0005743">
    <property type="term" value="C:mitochondrial inner membrane"/>
    <property type="evidence" value="ECO:0007669"/>
    <property type="project" value="UniProtKB-SubCell"/>
</dbReference>
<dbReference type="GO" id="GO:0045259">
    <property type="term" value="C:proton-transporting ATP synthase complex"/>
    <property type="evidence" value="ECO:0007669"/>
    <property type="project" value="UniProtKB-KW"/>
</dbReference>
<dbReference type="GO" id="GO:0046933">
    <property type="term" value="F:proton-transporting ATP synthase activity, rotational mechanism"/>
    <property type="evidence" value="ECO:0007669"/>
    <property type="project" value="EnsemblFungi"/>
</dbReference>
<dbReference type="GO" id="GO:0033615">
    <property type="term" value="P:mitochondrial proton-transporting ATP synthase complex assembly"/>
    <property type="evidence" value="ECO:0007669"/>
    <property type="project" value="EnsemblFungi"/>
</dbReference>
<dbReference type="GO" id="GO:0015986">
    <property type="term" value="P:proton motive force-driven ATP synthesis"/>
    <property type="evidence" value="ECO:0000318"/>
    <property type="project" value="GO_Central"/>
</dbReference>
<dbReference type="InterPro" id="IPR006995">
    <property type="entry name" value="ATP_synth_F0_jsu"/>
</dbReference>
<dbReference type="PANTHER" id="PTHR28060">
    <property type="entry name" value="ATP SYNTHASE SUBUNIT J, MITOCHONDRIAL"/>
    <property type="match status" value="1"/>
</dbReference>
<dbReference type="PANTHER" id="PTHR28060:SF1">
    <property type="entry name" value="ATP SYNTHASE SUBUNIT J, MITOCHONDRIAL"/>
    <property type="match status" value="1"/>
</dbReference>
<dbReference type="Pfam" id="PF04911">
    <property type="entry name" value="ATP-synt_J"/>
    <property type="match status" value="1"/>
</dbReference>
<reference evidence="9" key="1">
    <citation type="journal article" date="2004" name="Nature">
        <title>Genome evolution in yeasts.</title>
        <authorList>
            <person name="Dujon B."/>
            <person name="Sherman D."/>
            <person name="Fischer G."/>
            <person name="Durrens P."/>
            <person name="Casaregola S."/>
            <person name="Lafontaine I."/>
            <person name="de Montigny J."/>
            <person name="Marck C."/>
            <person name="Neuveglise C."/>
            <person name="Talla E."/>
            <person name="Goffard N."/>
            <person name="Frangeul L."/>
            <person name="Aigle M."/>
            <person name="Anthouard V."/>
            <person name="Babour A."/>
            <person name="Barbe V."/>
            <person name="Barnay S."/>
            <person name="Blanchin S."/>
            <person name="Beckerich J.-M."/>
            <person name="Beyne E."/>
            <person name="Bleykasten C."/>
            <person name="Boisrame A."/>
            <person name="Boyer J."/>
            <person name="Cattolico L."/>
            <person name="Confanioleri F."/>
            <person name="de Daruvar A."/>
            <person name="Despons L."/>
            <person name="Fabre E."/>
            <person name="Fairhead C."/>
            <person name="Ferry-Dumazet H."/>
            <person name="Groppi A."/>
            <person name="Hantraye F."/>
            <person name="Hennequin C."/>
            <person name="Jauniaux N."/>
            <person name="Joyet P."/>
            <person name="Kachouri R."/>
            <person name="Kerrest A."/>
            <person name="Koszul R."/>
            <person name="Lemaire M."/>
            <person name="Lesur I."/>
            <person name="Ma L."/>
            <person name="Muller H."/>
            <person name="Nicaud J.-M."/>
            <person name="Nikolski M."/>
            <person name="Oztas S."/>
            <person name="Ozier-Kalogeropoulos O."/>
            <person name="Pellenz S."/>
            <person name="Potier S."/>
            <person name="Richard G.-F."/>
            <person name="Straub M.-L."/>
            <person name="Suleau A."/>
            <person name="Swennen D."/>
            <person name="Tekaia F."/>
            <person name="Wesolowski-Louvel M."/>
            <person name="Westhof E."/>
            <person name="Wirth B."/>
            <person name="Zeniou-Meyer M."/>
            <person name="Zivanovic Y."/>
            <person name="Bolotin-Fukuhara M."/>
            <person name="Thierry A."/>
            <person name="Bouchier C."/>
            <person name="Caudron B."/>
            <person name="Scarpelli C."/>
            <person name="Gaillardin C."/>
            <person name="Weissenbach J."/>
            <person name="Wincker P."/>
            <person name="Souciet J.-L."/>
        </authorList>
    </citation>
    <scope>NUCLEOTIDE SEQUENCE [LARGE SCALE GENOMIC DNA]</scope>
    <source>
        <strain>CLIB 122 / E 150</strain>
    </source>
</reference>
<reference evidence="6" key="2">
    <citation type="journal article" date="2015" name="Biochem. J.">
        <title>The purification and characterization of ATP synthase complexes from the mitochondria of four fungal species.</title>
        <authorList>
            <person name="Liu S."/>
            <person name="Charlesworth T.J."/>
            <person name="Bason J.V."/>
            <person name="Montgomery M.G."/>
            <person name="Harbour M.E."/>
            <person name="Fearnley I.M."/>
            <person name="Walker J.E."/>
        </authorList>
    </citation>
    <scope>IDENTIFICATION IN ATP SYNTHASE COMPLEX</scope>
    <scope>FUNCTION OF ATP SYNTHASE COMPLEX</scope>
    <scope>SUBUNIT</scope>
    <scope>SUBCELLULAR LOCATION</scope>
    <scope>MASS SPECTROMETRY</scope>
    <scope>IDENTIFICATION BY MASS SPECTROMETRY</scope>
    <source>
        <strain evidence="5">CLIB 122 / E 150</strain>
    </source>
</reference>
<reference evidence="6" key="3">
    <citation type="journal article" date="2016" name="Mol. Cell">
        <title>Structure of a Complete ATP Synthase Dimer Reveals the Molecular Basis of Inner Mitochondrial Membrane Morphology.</title>
        <authorList>
            <person name="Hahn A."/>
            <person name="Parey K."/>
            <person name="Bublitz M."/>
            <person name="Mills D.J."/>
            <person name="Zickermann V."/>
            <person name="Vonck J."/>
            <person name="Kuehlbrandt W."/>
            <person name="Meier T."/>
        </authorList>
    </citation>
    <scope>STRUCTURE BY ELECTRON MICROSCOPY (7.7 ANGSTROMS) OF DIMERIC ATP SYNTHASE COMPLEX</scope>
    <scope>FUNCTION</scope>
    <scope>SUBUNIT</scope>
    <scope>SUBCELLULAR LOCATION</scope>
    <scope>IDENTIFICATION BY MASS SPECTROMETRY</scope>
</reference>
<gene>
    <name evidence="1" type="primary">ATP18</name>
    <name evidence="8" type="ordered locus">YALI0_D17490g</name>
</gene>
<feature type="initiator methionine" description="Removed" evidence="3">
    <location>
        <position position="1"/>
    </location>
</feature>
<feature type="chain" id="PRO_0000445328" description="ATP synthase subunit J, mitochondrial" evidence="6">
    <location>
        <begin position="2"/>
        <end position="62"/>
    </location>
</feature>
<feature type="transmembrane region" description="Helical" evidence="2">
    <location>
        <begin position="13"/>
        <end position="32"/>
    </location>
</feature>
<sequence length="62" mass="6941">MAFGIRRAYPTPIVKPLWPYAVGGVITFFLFAKAANASMNTEEFINDPRNPRFKAGGVKEEH</sequence>
<name>ATP18_YARLI</name>
<organism evidence="9">
    <name type="scientific">Yarrowia lipolytica (strain CLIB 122 / E 150)</name>
    <name type="common">Yeast</name>
    <name type="synonym">Candida lipolytica</name>
    <dbReference type="NCBI Taxonomy" id="284591"/>
    <lineage>
        <taxon>Eukaryota</taxon>
        <taxon>Fungi</taxon>
        <taxon>Dikarya</taxon>
        <taxon>Ascomycota</taxon>
        <taxon>Saccharomycotina</taxon>
        <taxon>Dipodascomycetes</taxon>
        <taxon>Dipodascales</taxon>
        <taxon>Dipodascales incertae sedis</taxon>
        <taxon>Yarrowia</taxon>
    </lineage>
</organism>
<protein>
    <recommendedName>
        <fullName evidence="1">ATP synthase subunit J, mitochondrial</fullName>
    </recommendedName>
    <alternativeName>
        <fullName evidence="1">ATPase synthase I subunit</fullName>
    </alternativeName>
</protein>
<accession>Q6C8S0</accession>